<gene>
    <name type="ordered locus">Rv2226</name>
    <name type="ORF">MTCY427.07</name>
</gene>
<sequence>MPVEAPRPARHLEVERKFDVIESTVSPSFEGIAAVVRVEQSPTQQLDAVYFDTPSHDLARNQITLRRRTGGADAGWHLKLPAGPDKRTEMRAPLSASGDAVPAELLDVVLAIVRDQPVQPVARISTHRESQILYGAGGDALAEFCNDDVTAWSAGAFHAAGAADNGPAEQQWREWELELVTTDGTADTKLLDRLANRLLDAGAAPAGHGSKLARVLGATSPGELPNGPQPPADPVHRAVSEQVEQLLLWDRAVRADAYDAVHQMRVTTRKIRSLLTDSQESFGLKESAWVIDELRELADVLGVARDAEVLGDRYQRELDALAPELVRGRVRERLVDGARRRYQTGLRRSLIALRSQRYFRLLDALDALVSERAHATSGEESAPVTIDAAYRRVRKAAKAAKTAGDQAGDHHRDEALHLIRKRAKRLRYTAAATGADNVSQEAKVIQTLLGDHQDSVVSREHLIQQAIAANTAGEDTFTYGLLYQQEADLAERCREQLEAALRKLDKAVRKARD</sequence>
<dbReference type="EMBL" id="AL123456">
    <property type="protein sequence ID" value="CCP45004.1"/>
    <property type="molecule type" value="Genomic_DNA"/>
</dbReference>
<dbReference type="PIR" id="F70776">
    <property type="entry name" value="F70776"/>
</dbReference>
<dbReference type="RefSeq" id="NP_216742.1">
    <property type="nucleotide sequence ID" value="NC_000962.3"/>
</dbReference>
<dbReference type="RefSeq" id="WP_003911786.1">
    <property type="nucleotide sequence ID" value="NZ_NVQJ01000008.1"/>
</dbReference>
<dbReference type="SMR" id="P9WLH9"/>
<dbReference type="STRING" id="83332.Rv2226"/>
<dbReference type="PaxDb" id="83332-Rv2226"/>
<dbReference type="DNASU" id="888513"/>
<dbReference type="GeneID" id="888513"/>
<dbReference type="KEGG" id="mtu:Rv2226"/>
<dbReference type="KEGG" id="mtv:RVBD_2226"/>
<dbReference type="TubercuList" id="Rv2226"/>
<dbReference type="eggNOG" id="COG3025">
    <property type="taxonomic scope" value="Bacteria"/>
</dbReference>
<dbReference type="eggNOG" id="COG5607">
    <property type="taxonomic scope" value="Bacteria"/>
</dbReference>
<dbReference type="InParanoid" id="P9WLH9"/>
<dbReference type="OrthoDB" id="9777271at2"/>
<dbReference type="PhylomeDB" id="P9WLH9"/>
<dbReference type="Proteomes" id="UP000001584">
    <property type="component" value="Chromosome"/>
</dbReference>
<dbReference type="GO" id="GO:0005829">
    <property type="term" value="C:cytosol"/>
    <property type="evidence" value="ECO:0007005"/>
    <property type="project" value="MTBBASE"/>
</dbReference>
<dbReference type="GO" id="GO:0005886">
    <property type="term" value="C:plasma membrane"/>
    <property type="evidence" value="ECO:0007005"/>
    <property type="project" value="MTBBASE"/>
</dbReference>
<dbReference type="CDD" id="cd07374">
    <property type="entry name" value="CYTH-like_Pase"/>
    <property type="match status" value="1"/>
</dbReference>
<dbReference type="FunFam" id="1.40.20.10:FF:000001">
    <property type="entry name" value="Adenylate cyclase, putative"/>
    <property type="match status" value="1"/>
</dbReference>
<dbReference type="Gene3D" id="1.40.20.10">
    <property type="entry name" value="CHAD domain"/>
    <property type="match status" value="1"/>
</dbReference>
<dbReference type="Gene3D" id="2.40.320.10">
    <property type="entry name" value="Hypothetical Protein Pfu-838710-001"/>
    <property type="match status" value="1"/>
</dbReference>
<dbReference type="InterPro" id="IPR007899">
    <property type="entry name" value="CHAD_dom"/>
</dbReference>
<dbReference type="InterPro" id="IPR038186">
    <property type="entry name" value="CHAD_dom_sf"/>
</dbReference>
<dbReference type="InterPro" id="IPR033469">
    <property type="entry name" value="CYTH-like_dom_sf"/>
</dbReference>
<dbReference type="InterPro" id="IPR023577">
    <property type="entry name" value="CYTH_domain"/>
</dbReference>
<dbReference type="PANTHER" id="PTHR39339:SF1">
    <property type="entry name" value="CHAD DOMAIN-CONTAINING PROTEIN"/>
    <property type="match status" value="1"/>
</dbReference>
<dbReference type="PANTHER" id="PTHR39339">
    <property type="entry name" value="SLR1444 PROTEIN"/>
    <property type="match status" value="1"/>
</dbReference>
<dbReference type="Pfam" id="PF05235">
    <property type="entry name" value="CHAD"/>
    <property type="match status" value="1"/>
</dbReference>
<dbReference type="Pfam" id="PF01928">
    <property type="entry name" value="CYTH"/>
    <property type="match status" value="1"/>
</dbReference>
<dbReference type="SMART" id="SM00880">
    <property type="entry name" value="CHAD"/>
    <property type="match status" value="1"/>
</dbReference>
<dbReference type="SMART" id="SM01118">
    <property type="entry name" value="CYTH"/>
    <property type="match status" value="1"/>
</dbReference>
<dbReference type="SUPFAM" id="SSF55154">
    <property type="entry name" value="CYTH-like phosphatases"/>
    <property type="match status" value="1"/>
</dbReference>
<dbReference type="PROSITE" id="PS51708">
    <property type="entry name" value="CHAD"/>
    <property type="match status" value="1"/>
</dbReference>
<dbReference type="PROSITE" id="PS51707">
    <property type="entry name" value="CYTH"/>
    <property type="match status" value="1"/>
</dbReference>
<evidence type="ECO:0000255" key="1">
    <source>
        <dbReference type="PROSITE-ProRule" id="PRU01044"/>
    </source>
</evidence>
<evidence type="ECO:0000255" key="2">
    <source>
        <dbReference type="PROSITE-ProRule" id="PRU01045"/>
    </source>
</evidence>
<keyword id="KW-1185">Reference proteome</keyword>
<accession>P9WLH9</accession>
<accession>L0T8Z9</accession>
<accession>Q10510</accession>
<name>Y2226_MYCTU</name>
<organism>
    <name type="scientific">Mycobacterium tuberculosis (strain ATCC 25618 / H37Rv)</name>
    <dbReference type="NCBI Taxonomy" id="83332"/>
    <lineage>
        <taxon>Bacteria</taxon>
        <taxon>Bacillati</taxon>
        <taxon>Actinomycetota</taxon>
        <taxon>Actinomycetes</taxon>
        <taxon>Mycobacteriales</taxon>
        <taxon>Mycobacteriaceae</taxon>
        <taxon>Mycobacterium</taxon>
        <taxon>Mycobacterium tuberculosis complex</taxon>
    </lineage>
</organism>
<feature type="chain" id="PRO_0000103979" description="Uncharacterized protein Rv2226">
    <location>
        <begin position="1"/>
        <end position="513"/>
    </location>
</feature>
<feature type="domain" description="CYTH" evidence="1">
    <location>
        <begin position="11"/>
        <end position="219"/>
    </location>
</feature>
<feature type="domain" description="CHAD" evidence="2">
    <location>
        <begin position="228"/>
        <end position="506"/>
    </location>
</feature>
<proteinExistence type="evidence at protein level"/>
<reference key="1">
    <citation type="journal article" date="1998" name="Nature">
        <title>Deciphering the biology of Mycobacterium tuberculosis from the complete genome sequence.</title>
        <authorList>
            <person name="Cole S.T."/>
            <person name="Brosch R."/>
            <person name="Parkhill J."/>
            <person name="Garnier T."/>
            <person name="Churcher C.M."/>
            <person name="Harris D.E."/>
            <person name="Gordon S.V."/>
            <person name="Eiglmeier K."/>
            <person name="Gas S."/>
            <person name="Barry C.E. III"/>
            <person name="Tekaia F."/>
            <person name="Badcock K."/>
            <person name="Basham D."/>
            <person name="Brown D."/>
            <person name="Chillingworth T."/>
            <person name="Connor R."/>
            <person name="Davies R.M."/>
            <person name="Devlin K."/>
            <person name="Feltwell T."/>
            <person name="Gentles S."/>
            <person name="Hamlin N."/>
            <person name="Holroyd S."/>
            <person name="Hornsby T."/>
            <person name="Jagels K."/>
            <person name="Krogh A."/>
            <person name="McLean J."/>
            <person name="Moule S."/>
            <person name="Murphy L.D."/>
            <person name="Oliver S."/>
            <person name="Osborne J."/>
            <person name="Quail M.A."/>
            <person name="Rajandream M.A."/>
            <person name="Rogers J."/>
            <person name="Rutter S."/>
            <person name="Seeger K."/>
            <person name="Skelton S."/>
            <person name="Squares S."/>
            <person name="Squares R."/>
            <person name="Sulston J.E."/>
            <person name="Taylor K."/>
            <person name="Whitehead S."/>
            <person name="Barrell B.G."/>
        </authorList>
    </citation>
    <scope>NUCLEOTIDE SEQUENCE [LARGE SCALE GENOMIC DNA]</scope>
    <source>
        <strain>ATCC 25618 / H37Rv</strain>
    </source>
</reference>
<reference key="2">
    <citation type="journal article" date="2011" name="Mol. Cell. Proteomics">
        <title>Proteogenomic analysis of Mycobacterium tuberculosis by high resolution mass spectrometry.</title>
        <authorList>
            <person name="Kelkar D.S."/>
            <person name="Kumar D."/>
            <person name="Kumar P."/>
            <person name="Balakrishnan L."/>
            <person name="Muthusamy B."/>
            <person name="Yadav A.K."/>
            <person name="Shrivastava P."/>
            <person name="Marimuthu A."/>
            <person name="Anand S."/>
            <person name="Sundaram H."/>
            <person name="Kingsbury R."/>
            <person name="Harsha H.C."/>
            <person name="Nair B."/>
            <person name="Prasad T.S."/>
            <person name="Chauhan D.S."/>
            <person name="Katoch K."/>
            <person name="Katoch V.M."/>
            <person name="Kumar P."/>
            <person name="Chaerkady R."/>
            <person name="Ramachandran S."/>
            <person name="Dash D."/>
            <person name="Pandey A."/>
        </authorList>
    </citation>
    <scope>IDENTIFICATION BY MASS SPECTROMETRY [LARGE SCALE ANALYSIS]</scope>
    <source>
        <strain>ATCC 25618 / H37Rv</strain>
    </source>
</reference>
<protein>
    <recommendedName>
        <fullName>Uncharacterized protein Rv2226</fullName>
    </recommendedName>
</protein>